<sequence length="494" mass="53904">MHPPGFKNFLLLVSSLFFIGLSAAPQSFSPSLRSLSGAPCRLSRAESERRCRAPGQPPGSALCHDRGRCECGVCICHVTEPGTYFGPLCECHDWVCETYDGKTCAGHGTCDCGKCKCDVGWSGEACQYPTKCDLTKKISNQMCKNSQDVICSNAGTCHCGRCKCDNSDGHGLIYGKFCECDDRECIDDETEEICGGHGKCYCGNCYCEAGWHGDKCEFQCDITPWESKRRCTSPDGKVCSNRGTCVCGECSCHDVDPTGDWGDIHGDTCECDERDCRAVYDRYSDDFCSGHGQCNCGRCDCRAGWYGKKCEHPKNCPLSAEESTRKCQGSSDLPCSGRGRCECGRCTCYPPGDSRVYGKTCECDDRRCEDLDGVVCGGRGTCSCGRCVCEKGWFGKLCQHPRKCNMTEEQSRSLCESADGTLCSGKGSCHCGKCICSGEEWYISGEFCDCDDRDCDKHDGLICTGNGICSCGNCECWDGWNGNACEIWLGTEYP</sequence>
<keyword id="KW-1015">Disulfide bond</keyword>
<keyword id="KW-0245">EGF-like domain</keyword>
<keyword id="KW-0325">Glycoprotein</keyword>
<keyword id="KW-1185">Reference proteome</keyword>
<keyword id="KW-0677">Repeat</keyword>
<keyword id="KW-0964">Secreted</keyword>
<keyword id="KW-0732">Signal</keyword>
<organism>
    <name type="scientific">Rattus norvegicus</name>
    <name type="common">Rat</name>
    <dbReference type="NCBI Taxonomy" id="10116"/>
    <lineage>
        <taxon>Eukaryota</taxon>
        <taxon>Metazoa</taxon>
        <taxon>Chordata</taxon>
        <taxon>Craniata</taxon>
        <taxon>Vertebrata</taxon>
        <taxon>Euteleostomi</taxon>
        <taxon>Mammalia</taxon>
        <taxon>Eutheria</taxon>
        <taxon>Euarchontoglires</taxon>
        <taxon>Glires</taxon>
        <taxon>Rodentia</taxon>
        <taxon>Myomorpha</taxon>
        <taxon>Muroidea</taxon>
        <taxon>Muridae</taxon>
        <taxon>Murinae</taxon>
        <taxon>Rattus</taxon>
    </lineage>
</organism>
<evidence type="ECO:0000255" key="1"/>
<evidence type="ECO:0000255" key="2">
    <source>
        <dbReference type="PROSITE-ProRule" id="PRU01392"/>
    </source>
</evidence>
<evidence type="ECO:0000305" key="3"/>
<protein>
    <recommendedName>
        <fullName>Integrin beta-like protein 1</fullName>
    </recommendedName>
</protein>
<comment type="subcellular location">
    <subcellularLocation>
        <location evidence="3">Secreted</location>
    </subcellularLocation>
</comment>
<comment type="domain">
    <text>Contains ten tandem EGF-like repeats strikingly similar to those found in the cysteine rich 'stalk-like' structure of integrin beta-subunits.</text>
</comment>
<feature type="signal peptide" evidence="1">
    <location>
        <begin position="1"/>
        <end position="23"/>
    </location>
</feature>
<feature type="chain" id="PRO_0000323024" description="Integrin beta-like protein 1">
    <location>
        <begin position="24"/>
        <end position="494"/>
    </location>
</feature>
<feature type="domain" description="I-EGF 1" evidence="2">
    <location>
        <begin position="40"/>
        <end position="90"/>
    </location>
</feature>
<feature type="repeat" description="I">
    <location>
        <begin position="51"/>
        <end position="95"/>
    </location>
</feature>
<feature type="domain" description="I-EGF 2" evidence="2">
    <location>
        <begin position="91"/>
        <end position="127"/>
    </location>
</feature>
<feature type="repeat" description="II">
    <location>
        <begin position="96"/>
        <end position="142"/>
    </location>
</feature>
<feature type="domain" description="I-EGF 3" evidence="2">
    <location>
        <begin position="132"/>
        <end position="179"/>
    </location>
</feature>
<feature type="repeat" description="III">
    <location>
        <begin position="143"/>
        <end position="184"/>
    </location>
</feature>
<feature type="domain" description="I-EGF 4" evidence="2">
    <location>
        <begin position="180"/>
        <end position="217"/>
    </location>
</feature>
<feature type="repeat" description="IV">
    <location>
        <begin position="185"/>
        <end position="230"/>
    </location>
</feature>
<feature type="domain" description="I-EGF 5" evidence="2">
    <location>
        <begin position="220"/>
        <end position="270"/>
    </location>
</feature>
<feature type="repeat" description="V">
    <location>
        <begin position="231"/>
        <end position="275"/>
    </location>
</feature>
<feature type="domain" description="I-EGF 6" evidence="2">
    <location>
        <begin position="271"/>
        <end position="311"/>
    </location>
</feature>
<feature type="repeat" description="VI">
    <location>
        <begin position="276"/>
        <end position="326"/>
    </location>
</feature>
<feature type="domain" description="I-EGF 7" evidence="2">
    <location>
        <begin position="316"/>
        <end position="362"/>
    </location>
</feature>
<feature type="repeat" description="VII">
    <location>
        <begin position="327"/>
        <end position="367"/>
    </location>
</feature>
<feature type="domain" description="I-EGF 8" evidence="2">
    <location>
        <begin position="363"/>
        <end position="399"/>
    </location>
</feature>
<feature type="repeat" description="VIII">
    <location>
        <begin position="368"/>
        <end position="414"/>
    </location>
</feature>
<feature type="domain" description="I-EGF 9" evidence="2">
    <location>
        <begin position="404"/>
        <end position="449"/>
    </location>
</feature>
<feature type="repeat" description="IX">
    <location>
        <begin position="415"/>
        <end position="454"/>
    </location>
</feature>
<feature type="domain" description="I-EGF 10" evidence="2">
    <location>
        <begin position="450"/>
        <end position="486"/>
    </location>
</feature>
<feature type="repeat" description="X">
    <location>
        <begin position="455"/>
        <end position="494"/>
    </location>
</feature>
<feature type="region of interest" description="Cysteine-rich tandem repeats">
    <location>
        <begin position="51"/>
        <end position="494"/>
    </location>
</feature>
<feature type="glycosylation site" description="N-linked (GlcNAc...) asparagine" evidence="1">
    <location>
        <position position="405"/>
    </location>
</feature>
<feature type="disulfide bond" evidence="2">
    <location>
        <begin position="40"/>
        <end position="71"/>
    </location>
</feature>
<feature type="disulfide bond" evidence="2">
    <location>
        <begin position="51"/>
        <end position="69"/>
    </location>
</feature>
<feature type="disulfide bond" evidence="2">
    <location>
        <begin position="63"/>
        <end position="74"/>
    </location>
</feature>
<feature type="disulfide bond" evidence="2">
    <location>
        <begin position="76"/>
        <end position="89"/>
    </location>
</feature>
<feature type="disulfide bond" evidence="2">
    <location>
        <begin position="91"/>
        <end position="112"/>
    </location>
</feature>
<feature type="disulfide bond" evidence="2">
    <location>
        <begin position="96"/>
        <end position="110"/>
    </location>
</feature>
<feature type="disulfide bond" evidence="2">
    <location>
        <begin position="104"/>
        <end position="115"/>
    </location>
</feature>
<feature type="disulfide bond" evidence="2">
    <location>
        <begin position="117"/>
        <end position="126"/>
    </location>
</feature>
<feature type="disulfide bond" evidence="2">
    <location>
        <begin position="132"/>
        <end position="159"/>
    </location>
</feature>
<feature type="disulfide bond" evidence="2">
    <location>
        <begin position="143"/>
        <end position="157"/>
    </location>
</feature>
<feature type="disulfide bond" evidence="2">
    <location>
        <begin position="151"/>
        <end position="162"/>
    </location>
</feature>
<feature type="disulfide bond" evidence="2">
    <location>
        <begin position="164"/>
        <end position="178"/>
    </location>
</feature>
<feature type="disulfide bond" evidence="2">
    <location>
        <begin position="180"/>
        <end position="202"/>
    </location>
</feature>
<feature type="disulfide bond" evidence="2">
    <location>
        <begin position="185"/>
        <end position="200"/>
    </location>
</feature>
<feature type="disulfide bond" evidence="2">
    <location>
        <begin position="194"/>
        <end position="205"/>
    </location>
</feature>
<feature type="disulfide bond" evidence="2">
    <location>
        <begin position="207"/>
        <end position="216"/>
    </location>
</feature>
<feature type="disulfide bond" evidence="2">
    <location>
        <begin position="220"/>
        <end position="247"/>
    </location>
</feature>
<feature type="disulfide bond" evidence="2">
    <location>
        <begin position="231"/>
        <end position="245"/>
    </location>
</feature>
<feature type="disulfide bond" evidence="2">
    <location>
        <begin position="239"/>
        <end position="250"/>
    </location>
</feature>
<feature type="disulfide bond" evidence="2">
    <location>
        <begin position="252"/>
        <end position="269"/>
    </location>
</feature>
<feature type="disulfide bond" evidence="2">
    <location>
        <begin position="271"/>
        <end position="296"/>
    </location>
</feature>
<feature type="disulfide bond" evidence="2">
    <location>
        <begin position="276"/>
        <end position="294"/>
    </location>
</feature>
<feature type="disulfide bond" evidence="2">
    <location>
        <begin position="288"/>
        <end position="299"/>
    </location>
</feature>
<feature type="disulfide bond" evidence="2">
    <location>
        <begin position="301"/>
        <end position="310"/>
    </location>
</feature>
<feature type="disulfide bond" evidence="2">
    <location>
        <begin position="316"/>
        <end position="343"/>
    </location>
</feature>
<feature type="disulfide bond" evidence="2">
    <location>
        <begin position="327"/>
        <end position="341"/>
    </location>
</feature>
<feature type="disulfide bond" evidence="2">
    <location>
        <begin position="335"/>
        <end position="346"/>
    </location>
</feature>
<feature type="disulfide bond" evidence="2">
    <location>
        <begin position="348"/>
        <end position="361"/>
    </location>
</feature>
<feature type="disulfide bond" evidence="2">
    <location>
        <begin position="363"/>
        <end position="384"/>
    </location>
</feature>
<feature type="disulfide bond" evidence="2">
    <location>
        <begin position="368"/>
        <end position="382"/>
    </location>
</feature>
<feature type="disulfide bond" evidence="2">
    <location>
        <begin position="376"/>
        <end position="387"/>
    </location>
</feature>
<feature type="disulfide bond" evidence="2">
    <location>
        <begin position="389"/>
        <end position="398"/>
    </location>
</feature>
<feature type="disulfide bond" evidence="2">
    <location>
        <begin position="404"/>
        <end position="431"/>
    </location>
</feature>
<feature type="disulfide bond" evidence="2">
    <location>
        <begin position="415"/>
        <end position="429"/>
    </location>
</feature>
<feature type="disulfide bond" evidence="2">
    <location>
        <begin position="423"/>
        <end position="434"/>
    </location>
</feature>
<feature type="disulfide bond" evidence="2">
    <location>
        <begin position="436"/>
        <end position="448"/>
    </location>
</feature>
<feature type="disulfide bond" evidence="2">
    <location>
        <begin position="450"/>
        <end position="471"/>
    </location>
</feature>
<feature type="disulfide bond" evidence="2">
    <location>
        <begin position="455"/>
        <end position="469"/>
    </location>
</feature>
<feature type="disulfide bond" evidence="2">
    <location>
        <begin position="463"/>
        <end position="474"/>
    </location>
</feature>
<feature type="disulfide bond" evidence="2">
    <location>
        <begin position="476"/>
        <end position="485"/>
    </location>
</feature>
<reference key="1">
    <citation type="journal article" date="2004" name="Genome Res.">
        <title>The status, quality, and expansion of the NIH full-length cDNA project: the Mammalian Gene Collection (MGC).</title>
        <authorList>
            <consortium name="The MGC Project Team"/>
        </authorList>
    </citation>
    <scope>NUCLEOTIDE SEQUENCE [LARGE SCALE MRNA]</scope>
    <source>
        <tissue>Testis</tissue>
    </source>
</reference>
<accession>Q5PQQ8</accession>
<name>ITGBL_RAT</name>
<proteinExistence type="evidence at transcript level"/>
<gene>
    <name type="primary">Itgbl1</name>
</gene>
<dbReference type="EMBL" id="BC087076">
    <property type="protein sequence ID" value="AAH87076.1"/>
    <property type="molecule type" value="mRNA"/>
</dbReference>
<dbReference type="RefSeq" id="NP_001017505.1">
    <property type="nucleotide sequence ID" value="NM_001017505.1"/>
</dbReference>
<dbReference type="FunCoup" id="Q5PQQ8">
    <property type="interactions" value="246"/>
</dbReference>
<dbReference type="STRING" id="10116.ENSRNOP00000006264"/>
<dbReference type="GlyCosmos" id="Q5PQQ8">
    <property type="glycosylation" value="1 site, No reported glycans"/>
</dbReference>
<dbReference type="GlyGen" id="Q5PQQ8">
    <property type="glycosylation" value="1 site"/>
</dbReference>
<dbReference type="PhosphoSitePlus" id="Q5PQQ8"/>
<dbReference type="PaxDb" id="10116-ENSRNOP00000006264"/>
<dbReference type="Ensembl" id="ENSRNOT00000006264.5">
    <property type="protein sequence ID" value="ENSRNOP00000006264.3"/>
    <property type="gene ID" value="ENSRNOG00000004516.6"/>
</dbReference>
<dbReference type="GeneID" id="498564"/>
<dbReference type="KEGG" id="rno:498564"/>
<dbReference type="UCSC" id="RGD:1560635">
    <property type="organism name" value="rat"/>
</dbReference>
<dbReference type="AGR" id="RGD:1560635"/>
<dbReference type="CTD" id="9358"/>
<dbReference type="RGD" id="1560635">
    <property type="gene designation" value="Itgbl1"/>
</dbReference>
<dbReference type="eggNOG" id="KOG1226">
    <property type="taxonomic scope" value="Eukaryota"/>
</dbReference>
<dbReference type="GeneTree" id="ENSGT01110000267169"/>
<dbReference type="HOGENOM" id="CLU_043045_0_0_1"/>
<dbReference type="InParanoid" id="Q5PQQ8"/>
<dbReference type="OMA" id="CGNDCKK"/>
<dbReference type="OrthoDB" id="9930377at2759"/>
<dbReference type="PhylomeDB" id="Q5PQQ8"/>
<dbReference type="TreeFam" id="TF332636"/>
<dbReference type="PRO" id="PR:Q5PQQ8"/>
<dbReference type="Proteomes" id="UP000002494">
    <property type="component" value="Chromosome 15"/>
</dbReference>
<dbReference type="Bgee" id="ENSRNOG00000004516">
    <property type="expression patterns" value="Expressed in quadriceps femoris and 20 other cell types or tissues"/>
</dbReference>
<dbReference type="GO" id="GO:0009986">
    <property type="term" value="C:cell surface"/>
    <property type="evidence" value="ECO:0000318"/>
    <property type="project" value="GO_Central"/>
</dbReference>
<dbReference type="GO" id="GO:0005576">
    <property type="term" value="C:extracellular region"/>
    <property type="evidence" value="ECO:0007669"/>
    <property type="project" value="UniProtKB-SubCell"/>
</dbReference>
<dbReference type="GO" id="GO:0005925">
    <property type="term" value="C:focal adhesion"/>
    <property type="evidence" value="ECO:0000318"/>
    <property type="project" value="GO_Central"/>
</dbReference>
<dbReference type="GO" id="GO:0008305">
    <property type="term" value="C:integrin complex"/>
    <property type="evidence" value="ECO:0000318"/>
    <property type="project" value="GO_Central"/>
</dbReference>
<dbReference type="GO" id="GO:0005178">
    <property type="term" value="F:integrin binding"/>
    <property type="evidence" value="ECO:0000318"/>
    <property type="project" value="GO_Central"/>
</dbReference>
<dbReference type="GO" id="GO:0033627">
    <property type="term" value="P:cell adhesion mediated by integrin"/>
    <property type="evidence" value="ECO:0000318"/>
    <property type="project" value="GO_Central"/>
</dbReference>
<dbReference type="GO" id="GO:0016477">
    <property type="term" value="P:cell migration"/>
    <property type="evidence" value="ECO:0000318"/>
    <property type="project" value="GO_Central"/>
</dbReference>
<dbReference type="GO" id="GO:0098609">
    <property type="term" value="P:cell-cell adhesion"/>
    <property type="evidence" value="ECO:0000318"/>
    <property type="project" value="GO_Central"/>
</dbReference>
<dbReference type="GO" id="GO:0007160">
    <property type="term" value="P:cell-matrix adhesion"/>
    <property type="evidence" value="ECO:0000318"/>
    <property type="project" value="GO_Central"/>
</dbReference>
<dbReference type="GO" id="GO:0007229">
    <property type="term" value="P:integrin-mediated signaling pathway"/>
    <property type="evidence" value="ECO:0000318"/>
    <property type="project" value="GO_Central"/>
</dbReference>
<dbReference type="FunFam" id="2.10.25.10:FF:000249">
    <property type="entry name" value="Integrin subunit beta like 1"/>
    <property type="match status" value="1"/>
</dbReference>
<dbReference type="FunFam" id="2.10.25.10:FF:000374">
    <property type="entry name" value="Integrin subunit beta like 1"/>
    <property type="match status" value="1"/>
</dbReference>
<dbReference type="FunFam" id="2.10.25.10:FF:000384">
    <property type="entry name" value="Integrin subunit beta like 1"/>
    <property type="match status" value="1"/>
</dbReference>
<dbReference type="FunFam" id="2.10.25.10:FF:000450">
    <property type="entry name" value="Integrin subunit beta like 1"/>
    <property type="match status" value="1"/>
</dbReference>
<dbReference type="FunFam" id="2.10.25.10:FF:000481">
    <property type="entry name" value="Integrin subunit beta like 1"/>
    <property type="match status" value="1"/>
</dbReference>
<dbReference type="FunFam" id="2.10.25.10:FF:000042">
    <property type="entry name" value="Integrin subunit beta-like 1"/>
    <property type="match status" value="4"/>
</dbReference>
<dbReference type="FunFam" id="2.10.25.10:FF:000175">
    <property type="entry name" value="Integrin subunit beta-like 1"/>
    <property type="match status" value="1"/>
</dbReference>
<dbReference type="Gene3D" id="2.10.25.10">
    <property type="entry name" value="Laminin"/>
    <property type="match status" value="10"/>
</dbReference>
<dbReference type="InterPro" id="IPR000742">
    <property type="entry name" value="EGF-like_dom"/>
</dbReference>
<dbReference type="InterPro" id="IPR013111">
    <property type="entry name" value="EGF_extracell"/>
</dbReference>
<dbReference type="InterPro" id="IPR015812">
    <property type="entry name" value="Integrin_bsu"/>
</dbReference>
<dbReference type="PANTHER" id="PTHR10082">
    <property type="entry name" value="INTEGRIN BETA SUBUNIT"/>
    <property type="match status" value="1"/>
</dbReference>
<dbReference type="PANTHER" id="PTHR10082:SF60">
    <property type="entry name" value="INTEGRIN BETA-PS"/>
    <property type="match status" value="1"/>
</dbReference>
<dbReference type="Pfam" id="PF07974">
    <property type="entry name" value="EGF_2"/>
    <property type="match status" value="5"/>
</dbReference>
<dbReference type="Pfam" id="PF23105">
    <property type="entry name" value="EGF_integrin"/>
    <property type="match status" value="2"/>
</dbReference>
<dbReference type="SMART" id="SM00181">
    <property type="entry name" value="EGF"/>
    <property type="match status" value="6"/>
</dbReference>
<dbReference type="SUPFAM" id="SSF57196">
    <property type="entry name" value="EGF/Laminin"/>
    <property type="match status" value="7"/>
</dbReference>
<dbReference type="PROSITE" id="PS00022">
    <property type="entry name" value="EGF_1"/>
    <property type="match status" value="5"/>
</dbReference>
<dbReference type="PROSITE" id="PS01186">
    <property type="entry name" value="EGF_2"/>
    <property type="match status" value="5"/>
</dbReference>
<dbReference type="PROSITE" id="PS00243">
    <property type="entry name" value="I_EGF_1"/>
    <property type="match status" value="9"/>
</dbReference>
<dbReference type="PROSITE" id="PS52047">
    <property type="entry name" value="I_EGF_2"/>
    <property type="match status" value="10"/>
</dbReference>